<name>SSRP_PSEA8</name>
<keyword id="KW-0963">Cytoplasm</keyword>
<keyword id="KW-0694">RNA-binding</keyword>
<sequence length="159" mass="18032">MAKQKKHPSGTIAQNKKALHDYFIEQRFEAGVALAGWEVKSLRAGKAQLVDSYVLLKDGEAWLLGSHITPLTTASTHVIADPVRTRKLLLHKRELGKLFGAVQQKGYACVALSMYWKKHLVKCEIALAKGKKDFDKRHTEKERDSDREIQRAMRHGKDD</sequence>
<gene>
    <name evidence="1" type="primary">smpB</name>
    <name type="ordered locus">PLES_51531</name>
</gene>
<accession>B7V1I0</accession>
<reference key="1">
    <citation type="journal article" date="2009" name="Genome Res.">
        <title>Newly introduced genomic prophage islands are critical determinants of in vivo competitiveness in the Liverpool epidemic strain of Pseudomonas aeruginosa.</title>
        <authorList>
            <person name="Winstanley C."/>
            <person name="Langille M.G.I."/>
            <person name="Fothergill J.L."/>
            <person name="Kukavica-Ibrulj I."/>
            <person name="Paradis-Bleau C."/>
            <person name="Sanschagrin F."/>
            <person name="Thomson N.R."/>
            <person name="Winsor G.L."/>
            <person name="Quail M.A."/>
            <person name="Lennard N."/>
            <person name="Bignell A."/>
            <person name="Clarke L."/>
            <person name="Seeger K."/>
            <person name="Saunders D."/>
            <person name="Harris D."/>
            <person name="Parkhill J."/>
            <person name="Hancock R.E.W."/>
            <person name="Brinkman F.S.L."/>
            <person name="Levesque R.C."/>
        </authorList>
    </citation>
    <scope>NUCLEOTIDE SEQUENCE [LARGE SCALE GENOMIC DNA]</scope>
    <source>
        <strain>LESB58</strain>
    </source>
</reference>
<proteinExistence type="inferred from homology"/>
<feature type="chain" id="PRO_1000116427" description="SsrA-binding protein">
    <location>
        <begin position="1"/>
        <end position="159"/>
    </location>
</feature>
<feature type="region of interest" description="Disordered" evidence="2">
    <location>
        <begin position="132"/>
        <end position="159"/>
    </location>
</feature>
<dbReference type="EMBL" id="FM209186">
    <property type="protein sequence ID" value="CAW29907.1"/>
    <property type="molecule type" value="Genomic_DNA"/>
</dbReference>
<dbReference type="RefSeq" id="WP_003100496.1">
    <property type="nucleotide sequence ID" value="NC_011770.1"/>
</dbReference>
<dbReference type="SMR" id="B7V1I0"/>
<dbReference type="GeneID" id="77223305"/>
<dbReference type="KEGG" id="pag:PLES_51531"/>
<dbReference type="HOGENOM" id="CLU_108953_3_0_6"/>
<dbReference type="GO" id="GO:0005829">
    <property type="term" value="C:cytosol"/>
    <property type="evidence" value="ECO:0007669"/>
    <property type="project" value="TreeGrafter"/>
</dbReference>
<dbReference type="GO" id="GO:0003723">
    <property type="term" value="F:RNA binding"/>
    <property type="evidence" value="ECO:0007669"/>
    <property type="project" value="UniProtKB-UniRule"/>
</dbReference>
<dbReference type="GO" id="GO:0070929">
    <property type="term" value="P:trans-translation"/>
    <property type="evidence" value="ECO:0007669"/>
    <property type="project" value="UniProtKB-UniRule"/>
</dbReference>
<dbReference type="CDD" id="cd09294">
    <property type="entry name" value="SmpB"/>
    <property type="match status" value="1"/>
</dbReference>
<dbReference type="Gene3D" id="2.40.280.10">
    <property type="match status" value="1"/>
</dbReference>
<dbReference type="HAMAP" id="MF_00023">
    <property type="entry name" value="SmpB"/>
    <property type="match status" value="1"/>
</dbReference>
<dbReference type="InterPro" id="IPR023620">
    <property type="entry name" value="SmpB"/>
</dbReference>
<dbReference type="InterPro" id="IPR000037">
    <property type="entry name" value="SsrA-bd_prot"/>
</dbReference>
<dbReference type="InterPro" id="IPR020081">
    <property type="entry name" value="SsrA-bd_prot_CS"/>
</dbReference>
<dbReference type="NCBIfam" id="NF003843">
    <property type="entry name" value="PRK05422.1"/>
    <property type="match status" value="1"/>
</dbReference>
<dbReference type="NCBIfam" id="TIGR00086">
    <property type="entry name" value="smpB"/>
    <property type="match status" value="1"/>
</dbReference>
<dbReference type="PANTHER" id="PTHR30308:SF2">
    <property type="entry name" value="SSRA-BINDING PROTEIN"/>
    <property type="match status" value="1"/>
</dbReference>
<dbReference type="PANTHER" id="PTHR30308">
    <property type="entry name" value="TMRNA-BINDING COMPONENT OF TRANS-TRANSLATION TAGGING COMPLEX"/>
    <property type="match status" value="1"/>
</dbReference>
<dbReference type="Pfam" id="PF01668">
    <property type="entry name" value="SmpB"/>
    <property type="match status" value="1"/>
</dbReference>
<dbReference type="SUPFAM" id="SSF74982">
    <property type="entry name" value="Small protein B (SmpB)"/>
    <property type="match status" value="1"/>
</dbReference>
<dbReference type="PROSITE" id="PS01317">
    <property type="entry name" value="SSRP"/>
    <property type="match status" value="1"/>
</dbReference>
<organism>
    <name type="scientific">Pseudomonas aeruginosa (strain LESB58)</name>
    <dbReference type="NCBI Taxonomy" id="557722"/>
    <lineage>
        <taxon>Bacteria</taxon>
        <taxon>Pseudomonadati</taxon>
        <taxon>Pseudomonadota</taxon>
        <taxon>Gammaproteobacteria</taxon>
        <taxon>Pseudomonadales</taxon>
        <taxon>Pseudomonadaceae</taxon>
        <taxon>Pseudomonas</taxon>
    </lineage>
</organism>
<evidence type="ECO:0000255" key="1">
    <source>
        <dbReference type="HAMAP-Rule" id="MF_00023"/>
    </source>
</evidence>
<evidence type="ECO:0000256" key="2">
    <source>
        <dbReference type="SAM" id="MobiDB-lite"/>
    </source>
</evidence>
<comment type="function">
    <text evidence="1">Required for rescue of stalled ribosomes mediated by trans-translation. Binds to transfer-messenger RNA (tmRNA), required for stable association of tmRNA with ribosomes. tmRNA and SmpB together mimic tRNA shape, replacing the anticodon stem-loop with SmpB. tmRNA is encoded by the ssrA gene; the 2 termini fold to resemble tRNA(Ala) and it encodes a 'tag peptide', a short internal open reading frame. During trans-translation Ala-aminoacylated tmRNA acts like a tRNA, entering the A-site of stalled ribosomes, displacing the stalled mRNA. The ribosome then switches to translate the ORF on the tmRNA; the nascent peptide is terminated with the 'tag peptide' encoded by the tmRNA and targeted for degradation. The ribosome is freed to recommence translation, which seems to be the essential function of trans-translation.</text>
</comment>
<comment type="subcellular location">
    <subcellularLocation>
        <location evidence="1">Cytoplasm</location>
    </subcellularLocation>
    <text evidence="1">The tmRNA-SmpB complex associates with stalled 70S ribosomes.</text>
</comment>
<comment type="similarity">
    <text evidence="1">Belongs to the SmpB family.</text>
</comment>
<protein>
    <recommendedName>
        <fullName evidence="1">SsrA-binding protein</fullName>
    </recommendedName>
    <alternativeName>
        <fullName evidence="1">Small protein B</fullName>
    </alternativeName>
</protein>